<organism>
    <name type="scientific">Streptococcus thermophilus (strain CNRZ 1066)</name>
    <dbReference type="NCBI Taxonomy" id="299768"/>
    <lineage>
        <taxon>Bacteria</taxon>
        <taxon>Bacillati</taxon>
        <taxon>Bacillota</taxon>
        <taxon>Bacilli</taxon>
        <taxon>Lactobacillales</taxon>
        <taxon>Streptococcaceae</taxon>
        <taxon>Streptococcus</taxon>
    </lineage>
</organism>
<dbReference type="EC" id="7.4.2.11" evidence="1"/>
<dbReference type="EMBL" id="CP000024">
    <property type="protein sequence ID" value="AAV61908.1"/>
    <property type="molecule type" value="Genomic_DNA"/>
</dbReference>
<dbReference type="RefSeq" id="WP_002949604.1">
    <property type="nucleotide sequence ID" value="NC_006449.1"/>
</dbReference>
<dbReference type="SMR" id="Q5M1F6"/>
<dbReference type="KEGG" id="stc:str0301"/>
<dbReference type="HOGENOM" id="CLU_000604_1_3_9"/>
<dbReference type="GO" id="GO:0005886">
    <property type="term" value="C:plasma membrane"/>
    <property type="evidence" value="ECO:0007669"/>
    <property type="project" value="UniProtKB-SubCell"/>
</dbReference>
<dbReference type="GO" id="GO:0033232">
    <property type="term" value="F:ABC-type D-methionine transporter activity"/>
    <property type="evidence" value="ECO:0007669"/>
    <property type="project" value="UniProtKB-EC"/>
</dbReference>
<dbReference type="GO" id="GO:0005524">
    <property type="term" value="F:ATP binding"/>
    <property type="evidence" value="ECO:0007669"/>
    <property type="project" value="UniProtKB-KW"/>
</dbReference>
<dbReference type="GO" id="GO:0016887">
    <property type="term" value="F:ATP hydrolysis activity"/>
    <property type="evidence" value="ECO:0007669"/>
    <property type="project" value="InterPro"/>
</dbReference>
<dbReference type="CDD" id="cd03258">
    <property type="entry name" value="ABC_MetN_methionine_transporter"/>
    <property type="match status" value="1"/>
</dbReference>
<dbReference type="Gene3D" id="3.30.70.260">
    <property type="match status" value="1"/>
</dbReference>
<dbReference type="Gene3D" id="3.40.50.300">
    <property type="entry name" value="P-loop containing nucleotide triphosphate hydrolases"/>
    <property type="match status" value="1"/>
</dbReference>
<dbReference type="InterPro" id="IPR003593">
    <property type="entry name" value="AAA+_ATPase"/>
</dbReference>
<dbReference type="InterPro" id="IPR003439">
    <property type="entry name" value="ABC_transporter-like_ATP-bd"/>
</dbReference>
<dbReference type="InterPro" id="IPR017871">
    <property type="entry name" value="ABC_transporter-like_CS"/>
</dbReference>
<dbReference type="InterPro" id="IPR045865">
    <property type="entry name" value="ACT-like_dom_sf"/>
</dbReference>
<dbReference type="InterPro" id="IPR041701">
    <property type="entry name" value="MetN_ABC"/>
</dbReference>
<dbReference type="InterPro" id="IPR050086">
    <property type="entry name" value="MetN_ABC_transporter-like"/>
</dbReference>
<dbReference type="InterPro" id="IPR018449">
    <property type="entry name" value="NIL_domain"/>
</dbReference>
<dbReference type="InterPro" id="IPR027417">
    <property type="entry name" value="P-loop_NTPase"/>
</dbReference>
<dbReference type="PANTHER" id="PTHR43166">
    <property type="entry name" value="AMINO ACID IMPORT ATP-BINDING PROTEIN"/>
    <property type="match status" value="1"/>
</dbReference>
<dbReference type="PANTHER" id="PTHR43166:SF30">
    <property type="entry name" value="METHIONINE IMPORT ATP-BINDING PROTEIN METN"/>
    <property type="match status" value="1"/>
</dbReference>
<dbReference type="Pfam" id="PF00005">
    <property type="entry name" value="ABC_tran"/>
    <property type="match status" value="1"/>
</dbReference>
<dbReference type="Pfam" id="PF09383">
    <property type="entry name" value="NIL"/>
    <property type="match status" value="1"/>
</dbReference>
<dbReference type="SMART" id="SM00382">
    <property type="entry name" value="AAA"/>
    <property type="match status" value="1"/>
</dbReference>
<dbReference type="SMART" id="SM00930">
    <property type="entry name" value="NIL"/>
    <property type="match status" value="1"/>
</dbReference>
<dbReference type="SUPFAM" id="SSF55021">
    <property type="entry name" value="ACT-like"/>
    <property type="match status" value="1"/>
</dbReference>
<dbReference type="SUPFAM" id="SSF52540">
    <property type="entry name" value="P-loop containing nucleoside triphosphate hydrolases"/>
    <property type="match status" value="1"/>
</dbReference>
<dbReference type="PROSITE" id="PS00211">
    <property type="entry name" value="ABC_TRANSPORTER_1"/>
    <property type="match status" value="1"/>
</dbReference>
<dbReference type="PROSITE" id="PS50893">
    <property type="entry name" value="ABC_TRANSPORTER_2"/>
    <property type="match status" value="1"/>
</dbReference>
<dbReference type="PROSITE" id="PS51264">
    <property type="entry name" value="METN"/>
    <property type="match status" value="1"/>
</dbReference>
<proteinExistence type="inferred from homology"/>
<name>METN_STRT1</name>
<evidence type="ECO:0000255" key="1">
    <source>
        <dbReference type="HAMAP-Rule" id="MF_01719"/>
    </source>
</evidence>
<comment type="function">
    <text evidence="1">Part of the ABC transporter complex MetNIQ involved in methionine import. Responsible for energy coupling to the transport system.</text>
</comment>
<comment type="catalytic activity">
    <reaction evidence="1">
        <text>L-methionine(out) + ATP + H2O = L-methionine(in) + ADP + phosphate + H(+)</text>
        <dbReference type="Rhea" id="RHEA:29779"/>
        <dbReference type="ChEBI" id="CHEBI:15377"/>
        <dbReference type="ChEBI" id="CHEBI:15378"/>
        <dbReference type="ChEBI" id="CHEBI:30616"/>
        <dbReference type="ChEBI" id="CHEBI:43474"/>
        <dbReference type="ChEBI" id="CHEBI:57844"/>
        <dbReference type="ChEBI" id="CHEBI:456216"/>
        <dbReference type="EC" id="7.4.2.11"/>
    </reaction>
</comment>
<comment type="catalytic activity">
    <reaction evidence="1">
        <text>D-methionine(out) + ATP + H2O = D-methionine(in) + ADP + phosphate + H(+)</text>
        <dbReference type="Rhea" id="RHEA:29767"/>
        <dbReference type="ChEBI" id="CHEBI:15377"/>
        <dbReference type="ChEBI" id="CHEBI:15378"/>
        <dbReference type="ChEBI" id="CHEBI:30616"/>
        <dbReference type="ChEBI" id="CHEBI:43474"/>
        <dbReference type="ChEBI" id="CHEBI:57932"/>
        <dbReference type="ChEBI" id="CHEBI:456216"/>
        <dbReference type="EC" id="7.4.2.11"/>
    </reaction>
</comment>
<comment type="subunit">
    <text evidence="1">The complex is composed of two ATP-binding proteins (MetN), two transmembrane proteins (MetI) and a solute-binding protein (MetQ).</text>
</comment>
<comment type="subcellular location">
    <subcellularLocation>
        <location evidence="1">Cell membrane</location>
        <topology evidence="1">Peripheral membrane protein</topology>
    </subcellularLocation>
</comment>
<comment type="similarity">
    <text evidence="1">Belongs to the ABC transporter superfamily. Methionine importer (TC 3.A.1.24) family.</text>
</comment>
<sequence>MSNVIIDLKNIDITFTQKRRTIQAVKDVSIQIEKGDIYGIVGYSGAGKSTLVRAINLLQVPTAGKITIGEDVTFENGQVQLTTKELRQKRQTIGMIFQHFNLMAQKTAYENVAFALRHSKLSNEEKDKKIRGLLELVDLADRAENYPAQLSGGQKQRVAIARALANDPEILISDESTSALDPKTTKQILSLLQDLNKKLGLTVVMITHEMQIVKDICNRVAVMQNGQLLEEGSVLDIFSNPQEDLTQEFIETAAGIEDALAKINAQPLVKNLPASALLVQLKYVGSSTDRPLLTEIFKDFGVSGNILYGNVEILGDTPVGELVVVLDGDSDKVIAALKAIENAGVSLRVLKKGAQ</sequence>
<keyword id="KW-0029">Amino-acid transport</keyword>
<keyword id="KW-0067">ATP-binding</keyword>
<keyword id="KW-1003">Cell membrane</keyword>
<keyword id="KW-0472">Membrane</keyword>
<keyword id="KW-0547">Nucleotide-binding</keyword>
<keyword id="KW-1278">Translocase</keyword>
<keyword id="KW-0813">Transport</keyword>
<reference key="1">
    <citation type="journal article" date="2004" name="Nat. Biotechnol.">
        <title>Complete sequence and comparative genome analysis of the dairy bacterium Streptococcus thermophilus.</title>
        <authorList>
            <person name="Bolotin A."/>
            <person name="Quinquis B."/>
            <person name="Renault P."/>
            <person name="Sorokin A."/>
            <person name="Ehrlich S.D."/>
            <person name="Kulakauskas S."/>
            <person name="Lapidus A."/>
            <person name="Goltsman E."/>
            <person name="Mazur M."/>
            <person name="Pusch G.D."/>
            <person name="Fonstein M."/>
            <person name="Overbeek R."/>
            <person name="Kyprides N."/>
            <person name="Purnelle B."/>
            <person name="Prozzi D."/>
            <person name="Ngui K."/>
            <person name="Masuy D."/>
            <person name="Hancy F."/>
            <person name="Burteau S."/>
            <person name="Boutry M."/>
            <person name="Delcour J."/>
            <person name="Goffeau A."/>
            <person name="Hols P."/>
        </authorList>
    </citation>
    <scope>NUCLEOTIDE SEQUENCE [LARGE SCALE GENOMIC DNA]</scope>
    <source>
        <strain>CNRZ 1066</strain>
    </source>
</reference>
<protein>
    <recommendedName>
        <fullName evidence="1">Methionine import ATP-binding protein MetN</fullName>
        <ecNumber evidence="1">7.4.2.11</ecNumber>
    </recommendedName>
</protein>
<accession>Q5M1F6</accession>
<feature type="chain" id="PRO_0000270427" description="Methionine import ATP-binding protein MetN">
    <location>
        <begin position="1"/>
        <end position="355"/>
    </location>
</feature>
<feature type="domain" description="ABC transporter" evidence="1">
    <location>
        <begin position="8"/>
        <end position="250"/>
    </location>
</feature>
<feature type="binding site" evidence="1">
    <location>
        <begin position="42"/>
        <end position="49"/>
    </location>
    <ligand>
        <name>ATP</name>
        <dbReference type="ChEBI" id="CHEBI:30616"/>
    </ligand>
</feature>
<gene>
    <name evidence="1" type="primary">metN</name>
    <name type="ordered locus">str0301</name>
</gene>